<sequence>MKFLDQAKVYIRSGGGGAGCVSFRREKFVEYGGPDGGDGGRGGDVWIEAVEGLNTLIDFRYQQHFKAARGGHGMGKQRTGARGEDAVLKVPVGTQIYEEDQETMIADLTEVGQRVLLAPGGNGGWGNLRFKSSINQAPRRSNPGEEGEERWIWLRLKLIADAGLVGLPNAGKSTFLSVATAANPKIADYPFTTLHPGLGVVDLGTSTRFVLADIPGLIEGAAEGAGLGHRFLGHVERCKVLLHLIDCTQDDPAGAYRTIRSELEAYDADFADRPEIVALNKIDALTPELVKEQLKQLKKVYKGKPLLISGVTGAGVKDALYAIAQHLGFNNDDIPLPKPSNADEEDPDTDQPWSPV</sequence>
<protein>
    <recommendedName>
        <fullName evidence="1">GTPase Obg</fullName>
        <ecNumber evidence="1">3.6.5.-</ecNumber>
    </recommendedName>
    <alternativeName>
        <fullName evidence="1">GTP-binding protein Obg</fullName>
    </alternativeName>
</protein>
<comment type="function">
    <text evidence="1">An essential GTPase which binds GTP, GDP and possibly (p)ppGpp with moderate affinity, with high nucleotide exchange rates and a fairly low GTP hydrolysis rate. Plays a role in control of the cell cycle, stress response, ribosome biogenesis and in those bacteria that undergo differentiation, in morphogenesis control.</text>
</comment>
<comment type="cofactor">
    <cofactor evidence="1">
        <name>Mg(2+)</name>
        <dbReference type="ChEBI" id="CHEBI:18420"/>
    </cofactor>
</comment>
<comment type="subunit">
    <text evidence="1">Monomer.</text>
</comment>
<comment type="subcellular location">
    <subcellularLocation>
        <location evidence="1">Cytoplasm</location>
    </subcellularLocation>
</comment>
<comment type="similarity">
    <text evidence="1">Belongs to the TRAFAC class OBG-HflX-like GTPase superfamily. OBG GTPase family.</text>
</comment>
<name>OBG_HYPNA</name>
<gene>
    <name evidence="1" type="primary">obg</name>
    <name type="ordered locus">HNE_2562</name>
</gene>
<reference key="1">
    <citation type="journal article" date="2006" name="J. Bacteriol.">
        <title>Comparative genomic evidence for a close relationship between the dimorphic prosthecate bacteria Hyphomonas neptunium and Caulobacter crescentus.</title>
        <authorList>
            <person name="Badger J.H."/>
            <person name="Hoover T.R."/>
            <person name="Brun Y.V."/>
            <person name="Weiner R.M."/>
            <person name="Laub M.T."/>
            <person name="Alexandre G."/>
            <person name="Mrazek J."/>
            <person name="Ren Q."/>
            <person name="Paulsen I.T."/>
            <person name="Nelson K.E."/>
            <person name="Khouri H.M."/>
            <person name="Radune D."/>
            <person name="Sosa J."/>
            <person name="Dodson R.J."/>
            <person name="Sullivan S.A."/>
            <person name="Rosovitz M.J."/>
            <person name="Madupu R."/>
            <person name="Brinkac L.M."/>
            <person name="Durkin A.S."/>
            <person name="Daugherty S.C."/>
            <person name="Kothari S.P."/>
            <person name="Giglio M.G."/>
            <person name="Zhou L."/>
            <person name="Haft D.H."/>
            <person name="Selengut J.D."/>
            <person name="Davidsen T.M."/>
            <person name="Yang Q."/>
            <person name="Zafar N."/>
            <person name="Ward N.L."/>
        </authorList>
    </citation>
    <scope>NUCLEOTIDE SEQUENCE [LARGE SCALE GENOMIC DNA]</scope>
    <source>
        <strain>ATCC 15444</strain>
    </source>
</reference>
<organism>
    <name type="scientific">Hyphomonas neptunium (strain ATCC 15444)</name>
    <dbReference type="NCBI Taxonomy" id="228405"/>
    <lineage>
        <taxon>Bacteria</taxon>
        <taxon>Pseudomonadati</taxon>
        <taxon>Pseudomonadota</taxon>
        <taxon>Alphaproteobacteria</taxon>
        <taxon>Hyphomonadales</taxon>
        <taxon>Hyphomonadaceae</taxon>
        <taxon>Hyphomonas</taxon>
    </lineage>
</organism>
<evidence type="ECO:0000255" key="1">
    <source>
        <dbReference type="HAMAP-Rule" id="MF_01454"/>
    </source>
</evidence>
<evidence type="ECO:0000255" key="2">
    <source>
        <dbReference type="PROSITE-ProRule" id="PRU01231"/>
    </source>
</evidence>
<evidence type="ECO:0000256" key="3">
    <source>
        <dbReference type="SAM" id="MobiDB-lite"/>
    </source>
</evidence>
<dbReference type="EC" id="3.6.5.-" evidence="1"/>
<dbReference type="EMBL" id="CP000158">
    <property type="protein sequence ID" value="ABI77203.1"/>
    <property type="molecule type" value="Genomic_DNA"/>
</dbReference>
<dbReference type="SMR" id="Q0BZ39"/>
<dbReference type="STRING" id="228405.HNE_2562"/>
<dbReference type="KEGG" id="hne:HNE_2562"/>
<dbReference type="eggNOG" id="COG0536">
    <property type="taxonomic scope" value="Bacteria"/>
</dbReference>
<dbReference type="HOGENOM" id="CLU_011747_2_0_5"/>
<dbReference type="Proteomes" id="UP000001959">
    <property type="component" value="Chromosome"/>
</dbReference>
<dbReference type="GO" id="GO:0005737">
    <property type="term" value="C:cytoplasm"/>
    <property type="evidence" value="ECO:0007669"/>
    <property type="project" value="UniProtKB-SubCell"/>
</dbReference>
<dbReference type="GO" id="GO:0005525">
    <property type="term" value="F:GTP binding"/>
    <property type="evidence" value="ECO:0007669"/>
    <property type="project" value="UniProtKB-UniRule"/>
</dbReference>
<dbReference type="GO" id="GO:0003924">
    <property type="term" value="F:GTPase activity"/>
    <property type="evidence" value="ECO:0007669"/>
    <property type="project" value="UniProtKB-UniRule"/>
</dbReference>
<dbReference type="GO" id="GO:0000287">
    <property type="term" value="F:magnesium ion binding"/>
    <property type="evidence" value="ECO:0007669"/>
    <property type="project" value="InterPro"/>
</dbReference>
<dbReference type="GO" id="GO:0042254">
    <property type="term" value="P:ribosome biogenesis"/>
    <property type="evidence" value="ECO:0007669"/>
    <property type="project" value="UniProtKB-UniRule"/>
</dbReference>
<dbReference type="CDD" id="cd01898">
    <property type="entry name" value="Obg"/>
    <property type="match status" value="1"/>
</dbReference>
<dbReference type="FunFam" id="2.70.210.12:FF:000001">
    <property type="entry name" value="GTPase Obg"/>
    <property type="match status" value="1"/>
</dbReference>
<dbReference type="Gene3D" id="2.70.210.12">
    <property type="entry name" value="GTP1/OBG domain"/>
    <property type="match status" value="1"/>
</dbReference>
<dbReference type="Gene3D" id="3.40.50.300">
    <property type="entry name" value="P-loop containing nucleotide triphosphate hydrolases"/>
    <property type="match status" value="1"/>
</dbReference>
<dbReference type="HAMAP" id="MF_01454">
    <property type="entry name" value="GTPase_Obg"/>
    <property type="match status" value="1"/>
</dbReference>
<dbReference type="InterPro" id="IPR031167">
    <property type="entry name" value="G_OBG"/>
</dbReference>
<dbReference type="InterPro" id="IPR006073">
    <property type="entry name" value="GTP-bd"/>
</dbReference>
<dbReference type="InterPro" id="IPR014100">
    <property type="entry name" value="GTP-bd_Obg/CgtA"/>
</dbReference>
<dbReference type="InterPro" id="IPR006074">
    <property type="entry name" value="GTP1-OBG_CS"/>
</dbReference>
<dbReference type="InterPro" id="IPR006169">
    <property type="entry name" value="GTP1_OBG_dom"/>
</dbReference>
<dbReference type="InterPro" id="IPR036726">
    <property type="entry name" value="GTP1_OBG_dom_sf"/>
</dbReference>
<dbReference type="InterPro" id="IPR045086">
    <property type="entry name" value="OBG_GTPase"/>
</dbReference>
<dbReference type="InterPro" id="IPR027417">
    <property type="entry name" value="P-loop_NTPase"/>
</dbReference>
<dbReference type="NCBIfam" id="TIGR02729">
    <property type="entry name" value="Obg_CgtA"/>
    <property type="match status" value="1"/>
</dbReference>
<dbReference type="NCBIfam" id="NF008955">
    <property type="entry name" value="PRK12297.1"/>
    <property type="match status" value="1"/>
</dbReference>
<dbReference type="NCBIfam" id="NF008956">
    <property type="entry name" value="PRK12299.1"/>
    <property type="match status" value="1"/>
</dbReference>
<dbReference type="PANTHER" id="PTHR11702">
    <property type="entry name" value="DEVELOPMENTALLY REGULATED GTP-BINDING PROTEIN-RELATED"/>
    <property type="match status" value="1"/>
</dbReference>
<dbReference type="PANTHER" id="PTHR11702:SF31">
    <property type="entry name" value="MITOCHONDRIAL RIBOSOME-ASSOCIATED GTPASE 2"/>
    <property type="match status" value="1"/>
</dbReference>
<dbReference type="Pfam" id="PF01018">
    <property type="entry name" value="GTP1_OBG"/>
    <property type="match status" value="1"/>
</dbReference>
<dbReference type="Pfam" id="PF01926">
    <property type="entry name" value="MMR_HSR1"/>
    <property type="match status" value="1"/>
</dbReference>
<dbReference type="PIRSF" id="PIRSF002401">
    <property type="entry name" value="GTP_bd_Obg/CgtA"/>
    <property type="match status" value="1"/>
</dbReference>
<dbReference type="PRINTS" id="PR00326">
    <property type="entry name" value="GTP1OBG"/>
</dbReference>
<dbReference type="SUPFAM" id="SSF82051">
    <property type="entry name" value="Obg GTP-binding protein N-terminal domain"/>
    <property type="match status" value="1"/>
</dbReference>
<dbReference type="SUPFAM" id="SSF52540">
    <property type="entry name" value="P-loop containing nucleoside triphosphate hydrolases"/>
    <property type="match status" value="1"/>
</dbReference>
<dbReference type="PROSITE" id="PS51710">
    <property type="entry name" value="G_OBG"/>
    <property type="match status" value="1"/>
</dbReference>
<dbReference type="PROSITE" id="PS00905">
    <property type="entry name" value="GTP1_OBG"/>
    <property type="match status" value="1"/>
</dbReference>
<dbReference type="PROSITE" id="PS51883">
    <property type="entry name" value="OBG"/>
    <property type="match status" value="1"/>
</dbReference>
<keyword id="KW-0963">Cytoplasm</keyword>
<keyword id="KW-0342">GTP-binding</keyword>
<keyword id="KW-0378">Hydrolase</keyword>
<keyword id="KW-0460">Magnesium</keyword>
<keyword id="KW-0479">Metal-binding</keyword>
<keyword id="KW-0547">Nucleotide-binding</keyword>
<keyword id="KW-1185">Reference proteome</keyword>
<proteinExistence type="inferred from homology"/>
<feature type="chain" id="PRO_0000385981" description="GTPase Obg">
    <location>
        <begin position="1"/>
        <end position="356"/>
    </location>
</feature>
<feature type="domain" description="Obg" evidence="2">
    <location>
        <begin position="1"/>
        <end position="159"/>
    </location>
</feature>
<feature type="domain" description="OBG-type G" evidence="1">
    <location>
        <begin position="160"/>
        <end position="328"/>
    </location>
</feature>
<feature type="region of interest" description="Disordered" evidence="3">
    <location>
        <begin position="333"/>
        <end position="356"/>
    </location>
</feature>
<feature type="binding site" evidence="1">
    <location>
        <begin position="166"/>
        <end position="173"/>
    </location>
    <ligand>
        <name>GTP</name>
        <dbReference type="ChEBI" id="CHEBI:37565"/>
    </ligand>
</feature>
<feature type="binding site" evidence="1">
    <location>
        <position position="173"/>
    </location>
    <ligand>
        <name>Mg(2+)</name>
        <dbReference type="ChEBI" id="CHEBI:18420"/>
    </ligand>
</feature>
<feature type="binding site" evidence="1">
    <location>
        <begin position="191"/>
        <end position="195"/>
    </location>
    <ligand>
        <name>GTP</name>
        <dbReference type="ChEBI" id="CHEBI:37565"/>
    </ligand>
</feature>
<feature type="binding site" evidence="1">
    <location>
        <position position="193"/>
    </location>
    <ligand>
        <name>Mg(2+)</name>
        <dbReference type="ChEBI" id="CHEBI:18420"/>
    </ligand>
</feature>
<feature type="binding site" evidence="1">
    <location>
        <begin position="213"/>
        <end position="216"/>
    </location>
    <ligand>
        <name>GTP</name>
        <dbReference type="ChEBI" id="CHEBI:37565"/>
    </ligand>
</feature>
<feature type="binding site" evidence="1">
    <location>
        <begin position="280"/>
        <end position="283"/>
    </location>
    <ligand>
        <name>GTP</name>
        <dbReference type="ChEBI" id="CHEBI:37565"/>
    </ligand>
</feature>
<feature type="binding site" evidence="1">
    <location>
        <begin position="309"/>
        <end position="311"/>
    </location>
    <ligand>
        <name>GTP</name>
        <dbReference type="ChEBI" id="CHEBI:37565"/>
    </ligand>
</feature>
<accession>Q0BZ39</accession>